<protein>
    <recommendedName>
        <fullName evidence="8">tRNA-dihydrouridine(47) synthase [NAD(P)(+)]-like</fullName>
        <ecNumber evidence="1">1.3.1.89</ecNumber>
    </recommendedName>
    <alternativeName>
        <fullName evidence="8">mRNA-dihydrouridine synthase DUS3L</fullName>
        <ecNumber evidence="1">1.3.1.-</ecNumber>
    </alternativeName>
    <alternativeName>
        <fullName>tRNA-dihydrouridine synthase 3-like</fullName>
    </alternativeName>
</protein>
<feature type="chain" id="PRO_0000247343" description="tRNA-dihydrouridine(47) synthase [NAD(P)(+)]-like">
    <location>
        <begin position="1"/>
        <end position="637"/>
    </location>
</feature>
<feature type="zinc finger region" description="C3H1-type 1" evidence="5">
    <location>
        <begin position="107"/>
        <end position="137"/>
    </location>
</feature>
<feature type="zinc finger region" description="C3H1-type 2" evidence="5">
    <location>
        <begin position="145"/>
        <end position="175"/>
    </location>
</feature>
<feature type="region of interest" description="Disordered" evidence="6">
    <location>
        <begin position="1"/>
        <end position="21"/>
    </location>
</feature>
<feature type="region of interest" description="Disordered" evidence="6">
    <location>
        <begin position="41"/>
        <end position="63"/>
    </location>
</feature>
<feature type="region of interest" description="Disordered" evidence="6">
    <location>
        <begin position="85"/>
        <end position="105"/>
    </location>
</feature>
<feature type="compositionally biased region" description="Basic residues" evidence="6">
    <location>
        <begin position="89"/>
        <end position="104"/>
    </location>
</feature>
<feature type="active site" description="Proton donor" evidence="2">
    <location>
        <position position="383"/>
    </location>
</feature>
<feature type="binding site" evidence="2">
    <location>
        <begin position="298"/>
        <end position="300"/>
    </location>
    <ligand>
        <name>FMN</name>
        <dbReference type="ChEBI" id="CHEBI:58210"/>
    </ligand>
</feature>
<feature type="binding site" evidence="2">
    <location>
        <position position="352"/>
    </location>
    <ligand>
        <name>FMN</name>
        <dbReference type="ChEBI" id="CHEBI:58210"/>
    </ligand>
</feature>
<feature type="binding site" evidence="2">
    <location>
        <position position="422"/>
    </location>
    <ligand>
        <name>FMN</name>
        <dbReference type="ChEBI" id="CHEBI:58210"/>
    </ligand>
</feature>
<feature type="binding site" evidence="2">
    <location>
        <position position="452"/>
    </location>
    <ligand>
        <name>FMN</name>
        <dbReference type="ChEBI" id="CHEBI:58210"/>
    </ligand>
</feature>
<feature type="binding site" evidence="2">
    <location>
        <begin position="484"/>
        <end position="486"/>
    </location>
    <ligand>
        <name>FMN</name>
        <dbReference type="ChEBI" id="CHEBI:58210"/>
    </ligand>
</feature>
<feature type="binding site" evidence="2">
    <location>
        <begin position="507"/>
        <end position="508"/>
    </location>
    <ligand>
        <name>FMN</name>
        <dbReference type="ChEBI" id="CHEBI:58210"/>
    </ligand>
</feature>
<feature type="modified residue" description="Phosphothreonine" evidence="10">
    <location>
        <position position="260"/>
    </location>
</feature>
<feature type="modified residue" description="Phosphoserine" evidence="10">
    <location>
        <position position="263"/>
    </location>
</feature>
<feature type="modified residue" description="Phosphoserine" evidence="10">
    <location>
        <position position="264"/>
    </location>
</feature>
<feature type="cross-link" description="Glycyl lysine isopeptide (Lys-Gly) (interchain with G-Cter in SUMO2)" evidence="3">
    <location>
        <position position="403"/>
    </location>
</feature>
<feature type="splice variant" id="VSP_019973" description="In isoform 2." evidence="7">
    <original>GGGCALMNRSAKFQQIVRGVNGVLDVPLTVKMRTGVQERVSLAHRLLPELRDWGVALVTLHGRSRE</original>
    <variation>VMAALPWSLGWVWPKPGTLPCWPCVSVSPSGHGAH</variation>
    <location>
        <begin position="392"/>
        <end position="457"/>
    </location>
</feature>
<feature type="splice variant" id="VSP_019974" description="In isoform 2." evidence="7">
    <location>
        <begin position="458"/>
        <end position="637"/>
    </location>
</feature>
<feature type="sequence conflict" description="In Ref. 2; BAE34157." evidence="8" ref="2">
    <original>G</original>
    <variation>E</variation>
    <location>
        <position position="413"/>
    </location>
</feature>
<name>DUS3L_MOUSE</name>
<gene>
    <name evidence="9" type="primary">Dus3l</name>
</gene>
<sequence length="637" mass="71078">MAETAAESGGGGDSGVGACERGVAPIKAQYRTTKERFHEYLDGDKQEGACQEVPTGDPAEPGAKRIRLEDGQENGKTEVAIESRERQVPKRARGQNKSRPHVKPAHYDKDRLCPSFLQEPATPCAFGDRCRFLHDVGRYLETKPADLGPRCVLFETFGRCPFSMTCRFAGAHLGPEGQNLVQEEVVARCAQLPSVRNGLDRALQQQLRKRQVCFERAEQALNRLTQSPMPTVVPETTVAMATPKQNSCHAQLDTVGGAGTPQSSPVPTCGPLTDEDVIRLRPCEKKRLDISGKLYLAPLTTCGNLPFRRICKRFGADVTCGEMAVCTNLLQGQMSEWALLKRHPCEDIFGVQLEGAFPDTMTKCAELLNRTIDVDFVDINVGCPIDLVYKKGGGCALMNRSAKFQQIVRGVNGVLDVPLTVKMRTGVQERVSLAHRLLPELRDWGVALVTLHGRSREQRYTRLADWPYIEQCAKVASPMPLFGNGDILSFEDANCAMQTGVAGIMVARGALLKPWLFTEIKEQRHWDISSSERLDILRDFTHYGLEHWGSDTQGVERTRRFLLEWLSFLCRYVPVGLLERPPQRINERPPYYLGRDYLETLMASQQAADWIRISEMLLGPVPPGFVFLPKHKANAYK</sequence>
<organism>
    <name type="scientific">Mus musculus</name>
    <name type="common">Mouse</name>
    <dbReference type="NCBI Taxonomy" id="10090"/>
    <lineage>
        <taxon>Eukaryota</taxon>
        <taxon>Metazoa</taxon>
        <taxon>Chordata</taxon>
        <taxon>Craniata</taxon>
        <taxon>Vertebrata</taxon>
        <taxon>Euteleostomi</taxon>
        <taxon>Mammalia</taxon>
        <taxon>Eutheria</taxon>
        <taxon>Euarchontoglires</taxon>
        <taxon>Glires</taxon>
        <taxon>Rodentia</taxon>
        <taxon>Myomorpha</taxon>
        <taxon>Muroidea</taxon>
        <taxon>Muridae</taxon>
        <taxon>Murinae</taxon>
        <taxon>Mus</taxon>
        <taxon>Mus</taxon>
    </lineage>
</organism>
<evidence type="ECO:0000250" key="1">
    <source>
        <dbReference type="UniProtKB" id="Q06053"/>
    </source>
</evidence>
<evidence type="ECO:0000250" key="2">
    <source>
        <dbReference type="UniProtKB" id="Q5SMC7"/>
    </source>
</evidence>
<evidence type="ECO:0000250" key="3">
    <source>
        <dbReference type="UniProtKB" id="Q96G46"/>
    </source>
</evidence>
<evidence type="ECO:0000250" key="4">
    <source>
        <dbReference type="UniProtKB" id="Q9UTH9"/>
    </source>
</evidence>
<evidence type="ECO:0000255" key="5">
    <source>
        <dbReference type="PROSITE-ProRule" id="PRU00723"/>
    </source>
</evidence>
<evidence type="ECO:0000256" key="6">
    <source>
        <dbReference type="SAM" id="MobiDB-lite"/>
    </source>
</evidence>
<evidence type="ECO:0000303" key="7">
    <source>
    </source>
</evidence>
<evidence type="ECO:0000305" key="8"/>
<evidence type="ECO:0000312" key="9">
    <source>
        <dbReference type="MGI" id="MGI:2147092"/>
    </source>
</evidence>
<evidence type="ECO:0007744" key="10">
    <source>
    </source>
</evidence>
<proteinExistence type="evidence at protein level"/>
<accession>Q91XI1</accession>
<accession>Q3TZQ1</accession>
<accession>Q7TT12</accession>
<comment type="function">
    <text evidence="3">Catalyzes the synthesis of dihydrouridine, a modified base, in various RNAs, such as tRNAs, mRNAs and some long non-coding RNAs (lncRNAs). Mainly modifies the uridine in position 47 (U47) in the D-loop of most cytoplasmic tRNAs. Also able to mediate the formation of dihydrouridine in some mRNAs, thereby regulating their translation.</text>
</comment>
<comment type="catalytic activity">
    <reaction evidence="1">
        <text>5,6-dihydrouridine(47) in tRNA + NAD(+) = uridine(47) in tRNA + NADH + H(+)</text>
        <dbReference type="Rhea" id="RHEA:53364"/>
        <dbReference type="Rhea" id="RHEA-COMP:13539"/>
        <dbReference type="Rhea" id="RHEA-COMP:13540"/>
        <dbReference type="ChEBI" id="CHEBI:15378"/>
        <dbReference type="ChEBI" id="CHEBI:57540"/>
        <dbReference type="ChEBI" id="CHEBI:57945"/>
        <dbReference type="ChEBI" id="CHEBI:65315"/>
        <dbReference type="ChEBI" id="CHEBI:74443"/>
        <dbReference type="EC" id="1.3.1.89"/>
    </reaction>
    <physiologicalReaction direction="right-to-left" evidence="1">
        <dbReference type="Rhea" id="RHEA:53366"/>
    </physiologicalReaction>
</comment>
<comment type="catalytic activity">
    <reaction evidence="1">
        <text>5,6-dihydrouridine(47) in tRNA + NADP(+) = uridine(47) in tRNA + NADPH + H(+)</text>
        <dbReference type="Rhea" id="RHEA:53360"/>
        <dbReference type="Rhea" id="RHEA-COMP:13539"/>
        <dbReference type="Rhea" id="RHEA-COMP:13540"/>
        <dbReference type="ChEBI" id="CHEBI:15378"/>
        <dbReference type="ChEBI" id="CHEBI:57783"/>
        <dbReference type="ChEBI" id="CHEBI:58349"/>
        <dbReference type="ChEBI" id="CHEBI:65315"/>
        <dbReference type="ChEBI" id="CHEBI:74443"/>
        <dbReference type="EC" id="1.3.1.89"/>
    </reaction>
    <physiologicalReaction direction="right-to-left" evidence="1">
        <dbReference type="Rhea" id="RHEA:53362"/>
    </physiologicalReaction>
</comment>
<comment type="catalytic activity">
    <reaction evidence="4">
        <text>a 5,6-dihydrouridine in mRNA + NAD(+) = a uridine in mRNA + NADH + H(+)</text>
        <dbReference type="Rhea" id="RHEA:69851"/>
        <dbReference type="Rhea" id="RHEA-COMP:14658"/>
        <dbReference type="Rhea" id="RHEA-COMP:17789"/>
        <dbReference type="ChEBI" id="CHEBI:15378"/>
        <dbReference type="ChEBI" id="CHEBI:57540"/>
        <dbReference type="ChEBI" id="CHEBI:57945"/>
        <dbReference type="ChEBI" id="CHEBI:65315"/>
        <dbReference type="ChEBI" id="CHEBI:74443"/>
    </reaction>
    <physiologicalReaction direction="right-to-left" evidence="4">
        <dbReference type="Rhea" id="RHEA:69853"/>
    </physiologicalReaction>
</comment>
<comment type="catalytic activity">
    <reaction evidence="4">
        <text>a 5,6-dihydrouridine in mRNA + NADP(+) = a uridine in mRNA + NADPH + H(+)</text>
        <dbReference type="Rhea" id="RHEA:69855"/>
        <dbReference type="Rhea" id="RHEA-COMP:14658"/>
        <dbReference type="Rhea" id="RHEA-COMP:17789"/>
        <dbReference type="ChEBI" id="CHEBI:15378"/>
        <dbReference type="ChEBI" id="CHEBI:57783"/>
        <dbReference type="ChEBI" id="CHEBI:58349"/>
        <dbReference type="ChEBI" id="CHEBI:65315"/>
        <dbReference type="ChEBI" id="CHEBI:74443"/>
    </reaction>
    <physiologicalReaction direction="right-to-left" evidence="4">
        <dbReference type="Rhea" id="RHEA:69857"/>
    </physiologicalReaction>
</comment>
<comment type="cofactor">
    <cofactor evidence="2">
        <name>FMN</name>
        <dbReference type="ChEBI" id="CHEBI:58210"/>
    </cofactor>
</comment>
<comment type="alternative products">
    <event type="alternative splicing"/>
    <isoform>
        <id>Q91XI1-1</id>
        <name>1</name>
        <sequence type="displayed"/>
    </isoform>
    <isoform>
        <id>Q91XI1-2</id>
        <name>2</name>
        <sequence type="described" ref="VSP_019973 VSP_019974"/>
    </isoform>
</comment>
<comment type="similarity">
    <text evidence="8">Belongs to the Dus family. Dus3 subfamily.</text>
</comment>
<dbReference type="EC" id="1.3.1.89" evidence="1"/>
<dbReference type="EC" id="1.3.1.-" evidence="1"/>
<dbReference type="EMBL" id="AY040840">
    <property type="protein sequence ID" value="AAK84684.1"/>
    <property type="molecule type" value="mRNA"/>
</dbReference>
<dbReference type="EMBL" id="AK157702">
    <property type="protein sequence ID" value="BAE34157.1"/>
    <property type="molecule type" value="mRNA"/>
</dbReference>
<dbReference type="EMBL" id="BC052481">
    <property type="protein sequence ID" value="AAH52481.1"/>
    <property type="molecule type" value="mRNA"/>
</dbReference>
<dbReference type="CCDS" id="CCDS28914.1">
    <molecule id="Q91XI1-1"/>
</dbReference>
<dbReference type="RefSeq" id="NP_659107.2">
    <property type="nucleotide sequence ID" value="NM_144858.2"/>
</dbReference>
<dbReference type="SMR" id="Q91XI1"/>
<dbReference type="BioGRID" id="230340">
    <property type="interactions" value="5"/>
</dbReference>
<dbReference type="FunCoup" id="Q91XI1">
    <property type="interactions" value="1576"/>
</dbReference>
<dbReference type="STRING" id="10090.ENSMUSP00000007747"/>
<dbReference type="GlyGen" id="Q91XI1">
    <property type="glycosylation" value="1 site, 1 O-linked glycan (1 site)"/>
</dbReference>
<dbReference type="iPTMnet" id="Q91XI1"/>
<dbReference type="PhosphoSitePlus" id="Q91XI1"/>
<dbReference type="PaxDb" id="10090-ENSMUSP00000007747"/>
<dbReference type="PeptideAtlas" id="Q91XI1"/>
<dbReference type="ProteomicsDB" id="277611">
    <molecule id="Q91XI1-1"/>
</dbReference>
<dbReference type="ProteomicsDB" id="277612">
    <molecule id="Q91XI1-2"/>
</dbReference>
<dbReference type="Pumba" id="Q91XI1"/>
<dbReference type="DNASU" id="224907"/>
<dbReference type="GeneID" id="224907"/>
<dbReference type="KEGG" id="mmu:224907"/>
<dbReference type="UCSC" id="uc008ddd.2">
    <molecule id="Q91XI1-1"/>
    <property type="organism name" value="mouse"/>
</dbReference>
<dbReference type="AGR" id="MGI:2147092"/>
<dbReference type="CTD" id="56931"/>
<dbReference type="MGI" id="MGI:2147092">
    <property type="gene designation" value="Dus3l"/>
</dbReference>
<dbReference type="eggNOG" id="KOG2333">
    <property type="taxonomic scope" value="Eukaryota"/>
</dbReference>
<dbReference type="InParanoid" id="Q91XI1"/>
<dbReference type="OrthoDB" id="259935at2759"/>
<dbReference type="PhylomeDB" id="Q91XI1"/>
<dbReference type="TreeFam" id="TF105726"/>
<dbReference type="BioGRID-ORCS" id="224907">
    <property type="hits" value="3 hits in 80 CRISPR screens"/>
</dbReference>
<dbReference type="ChiTaRS" id="Dus3l">
    <property type="organism name" value="mouse"/>
</dbReference>
<dbReference type="PRO" id="PR:Q91XI1"/>
<dbReference type="Proteomes" id="UP000000589">
    <property type="component" value="Unplaced"/>
</dbReference>
<dbReference type="RNAct" id="Q91XI1">
    <property type="molecule type" value="protein"/>
</dbReference>
<dbReference type="GO" id="GO:0050660">
    <property type="term" value="F:flavin adenine dinucleotide binding"/>
    <property type="evidence" value="ECO:0007669"/>
    <property type="project" value="InterPro"/>
</dbReference>
<dbReference type="GO" id="GO:0106414">
    <property type="term" value="F:mRNA dihydrouridine synthase activity"/>
    <property type="evidence" value="ECO:0007669"/>
    <property type="project" value="RHEA"/>
</dbReference>
<dbReference type="GO" id="GO:0102265">
    <property type="term" value="F:tRNA-dihydrouridine47 synthase activity"/>
    <property type="evidence" value="ECO:0000250"/>
    <property type="project" value="UniProtKB"/>
</dbReference>
<dbReference type="GO" id="GO:0008270">
    <property type="term" value="F:zinc ion binding"/>
    <property type="evidence" value="ECO:0007669"/>
    <property type="project" value="UniProtKB-KW"/>
</dbReference>
<dbReference type="GO" id="GO:0006397">
    <property type="term" value="P:mRNA processing"/>
    <property type="evidence" value="ECO:0007669"/>
    <property type="project" value="UniProtKB-KW"/>
</dbReference>
<dbReference type="GO" id="GO:0006417">
    <property type="term" value="P:regulation of translation"/>
    <property type="evidence" value="ECO:0000250"/>
    <property type="project" value="UniProtKB"/>
</dbReference>
<dbReference type="GO" id="GO:0002943">
    <property type="term" value="P:tRNA dihydrouridine synthesis"/>
    <property type="evidence" value="ECO:0000250"/>
    <property type="project" value="UniProtKB"/>
</dbReference>
<dbReference type="CDD" id="cd02801">
    <property type="entry name" value="DUS_like_FMN"/>
    <property type="match status" value="1"/>
</dbReference>
<dbReference type="FunFam" id="3.20.20.70:FF:000067">
    <property type="entry name" value="tRNA-dihydrouridine(47) synthase [NAD(P)(+)]"/>
    <property type="match status" value="1"/>
</dbReference>
<dbReference type="FunFam" id="4.10.1000.10:FF:000029">
    <property type="entry name" value="tRNA-dihydrouridine(47) synthase [NAD(P)(+)]"/>
    <property type="match status" value="1"/>
</dbReference>
<dbReference type="Gene3D" id="3.20.20.70">
    <property type="entry name" value="Aldolase class I"/>
    <property type="match status" value="1"/>
</dbReference>
<dbReference type="Gene3D" id="4.10.1000.10">
    <property type="entry name" value="Zinc finger, CCCH-type"/>
    <property type="match status" value="1"/>
</dbReference>
<dbReference type="InterPro" id="IPR013785">
    <property type="entry name" value="Aldolase_TIM"/>
</dbReference>
<dbReference type="InterPro" id="IPR035587">
    <property type="entry name" value="DUS-like_FMN-bd"/>
</dbReference>
<dbReference type="InterPro" id="IPR018517">
    <property type="entry name" value="tRNA_hU_synthase_CS"/>
</dbReference>
<dbReference type="InterPro" id="IPR041367">
    <property type="entry name" value="Znf-CCCH_4"/>
</dbReference>
<dbReference type="InterPro" id="IPR000571">
    <property type="entry name" value="Znf_CCCH"/>
</dbReference>
<dbReference type="PANTHER" id="PTHR45846">
    <property type="entry name" value="TRNA-DIHYDROURIDINE(47) SYNTHASE [NAD(P)(+)]-LIKE"/>
    <property type="match status" value="1"/>
</dbReference>
<dbReference type="PANTHER" id="PTHR45846:SF1">
    <property type="entry name" value="TRNA-DIHYDROURIDINE(47) SYNTHASE [NAD(P)(+)]-LIKE"/>
    <property type="match status" value="1"/>
</dbReference>
<dbReference type="Pfam" id="PF01207">
    <property type="entry name" value="Dus"/>
    <property type="match status" value="1"/>
</dbReference>
<dbReference type="Pfam" id="PF18044">
    <property type="entry name" value="zf-CCCH_4"/>
    <property type="match status" value="1"/>
</dbReference>
<dbReference type="SUPFAM" id="SSF51395">
    <property type="entry name" value="FMN-linked oxidoreductases"/>
    <property type="match status" value="1"/>
</dbReference>
<dbReference type="PROSITE" id="PS01136">
    <property type="entry name" value="UPF0034"/>
    <property type="match status" value="1"/>
</dbReference>
<dbReference type="PROSITE" id="PS50103">
    <property type="entry name" value="ZF_C3H1"/>
    <property type="match status" value="2"/>
</dbReference>
<reference key="1">
    <citation type="submission" date="2001-06" db="EMBL/GenBank/DDBJ databases">
        <title>Cloning of a putative zinc finger protein.</title>
        <authorList>
            <person name="Leu M."/>
            <person name="Ehler E."/>
            <person name="Perriard J.-C."/>
        </authorList>
    </citation>
    <scope>NUCLEOTIDE SEQUENCE [MRNA] (ISOFORM 1)</scope>
    <source>
        <strain>BALB/cJ</strain>
        <tissue>Heart</tissue>
    </source>
</reference>
<reference key="2">
    <citation type="journal article" date="2005" name="Science">
        <title>The transcriptional landscape of the mammalian genome.</title>
        <authorList>
            <person name="Carninci P."/>
            <person name="Kasukawa T."/>
            <person name="Katayama S."/>
            <person name="Gough J."/>
            <person name="Frith M.C."/>
            <person name="Maeda N."/>
            <person name="Oyama R."/>
            <person name="Ravasi T."/>
            <person name="Lenhard B."/>
            <person name="Wells C."/>
            <person name="Kodzius R."/>
            <person name="Shimokawa K."/>
            <person name="Bajic V.B."/>
            <person name="Brenner S.E."/>
            <person name="Batalov S."/>
            <person name="Forrest A.R."/>
            <person name="Zavolan M."/>
            <person name="Davis M.J."/>
            <person name="Wilming L.G."/>
            <person name="Aidinis V."/>
            <person name="Allen J.E."/>
            <person name="Ambesi-Impiombato A."/>
            <person name="Apweiler R."/>
            <person name="Aturaliya R.N."/>
            <person name="Bailey T.L."/>
            <person name="Bansal M."/>
            <person name="Baxter L."/>
            <person name="Beisel K.W."/>
            <person name="Bersano T."/>
            <person name="Bono H."/>
            <person name="Chalk A.M."/>
            <person name="Chiu K.P."/>
            <person name="Choudhary V."/>
            <person name="Christoffels A."/>
            <person name="Clutterbuck D.R."/>
            <person name="Crowe M.L."/>
            <person name="Dalla E."/>
            <person name="Dalrymple B.P."/>
            <person name="de Bono B."/>
            <person name="Della Gatta G."/>
            <person name="di Bernardo D."/>
            <person name="Down T."/>
            <person name="Engstrom P."/>
            <person name="Fagiolini M."/>
            <person name="Faulkner G."/>
            <person name="Fletcher C.F."/>
            <person name="Fukushima T."/>
            <person name="Furuno M."/>
            <person name="Futaki S."/>
            <person name="Gariboldi M."/>
            <person name="Georgii-Hemming P."/>
            <person name="Gingeras T.R."/>
            <person name="Gojobori T."/>
            <person name="Green R.E."/>
            <person name="Gustincich S."/>
            <person name="Harbers M."/>
            <person name="Hayashi Y."/>
            <person name="Hensch T.K."/>
            <person name="Hirokawa N."/>
            <person name="Hill D."/>
            <person name="Huminiecki L."/>
            <person name="Iacono M."/>
            <person name="Ikeo K."/>
            <person name="Iwama A."/>
            <person name="Ishikawa T."/>
            <person name="Jakt M."/>
            <person name="Kanapin A."/>
            <person name="Katoh M."/>
            <person name="Kawasawa Y."/>
            <person name="Kelso J."/>
            <person name="Kitamura H."/>
            <person name="Kitano H."/>
            <person name="Kollias G."/>
            <person name="Krishnan S.P."/>
            <person name="Kruger A."/>
            <person name="Kummerfeld S.K."/>
            <person name="Kurochkin I.V."/>
            <person name="Lareau L.F."/>
            <person name="Lazarevic D."/>
            <person name="Lipovich L."/>
            <person name="Liu J."/>
            <person name="Liuni S."/>
            <person name="McWilliam S."/>
            <person name="Madan Babu M."/>
            <person name="Madera M."/>
            <person name="Marchionni L."/>
            <person name="Matsuda H."/>
            <person name="Matsuzawa S."/>
            <person name="Miki H."/>
            <person name="Mignone F."/>
            <person name="Miyake S."/>
            <person name="Morris K."/>
            <person name="Mottagui-Tabar S."/>
            <person name="Mulder N."/>
            <person name="Nakano N."/>
            <person name="Nakauchi H."/>
            <person name="Ng P."/>
            <person name="Nilsson R."/>
            <person name="Nishiguchi S."/>
            <person name="Nishikawa S."/>
            <person name="Nori F."/>
            <person name="Ohara O."/>
            <person name="Okazaki Y."/>
            <person name="Orlando V."/>
            <person name="Pang K.C."/>
            <person name="Pavan W.J."/>
            <person name="Pavesi G."/>
            <person name="Pesole G."/>
            <person name="Petrovsky N."/>
            <person name="Piazza S."/>
            <person name="Reed J."/>
            <person name="Reid J.F."/>
            <person name="Ring B.Z."/>
            <person name="Ringwald M."/>
            <person name="Rost B."/>
            <person name="Ruan Y."/>
            <person name="Salzberg S.L."/>
            <person name="Sandelin A."/>
            <person name="Schneider C."/>
            <person name="Schoenbach C."/>
            <person name="Sekiguchi K."/>
            <person name="Semple C.A."/>
            <person name="Seno S."/>
            <person name="Sessa L."/>
            <person name="Sheng Y."/>
            <person name="Shibata Y."/>
            <person name="Shimada H."/>
            <person name="Shimada K."/>
            <person name="Silva D."/>
            <person name="Sinclair B."/>
            <person name="Sperling S."/>
            <person name="Stupka E."/>
            <person name="Sugiura K."/>
            <person name="Sultana R."/>
            <person name="Takenaka Y."/>
            <person name="Taki K."/>
            <person name="Tammoja K."/>
            <person name="Tan S.L."/>
            <person name="Tang S."/>
            <person name="Taylor M.S."/>
            <person name="Tegner J."/>
            <person name="Teichmann S.A."/>
            <person name="Ueda H.R."/>
            <person name="van Nimwegen E."/>
            <person name="Verardo R."/>
            <person name="Wei C.L."/>
            <person name="Yagi K."/>
            <person name="Yamanishi H."/>
            <person name="Zabarovsky E."/>
            <person name="Zhu S."/>
            <person name="Zimmer A."/>
            <person name="Hide W."/>
            <person name="Bult C."/>
            <person name="Grimmond S.M."/>
            <person name="Teasdale R.D."/>
            <person name="Liu E.T."/>
            <person name="Brusic V."/>
            <person name="Quackenbush J."/>
            <person name="Wahlestedt C."/>
            <person name="Mattick J.S."/>
            <person name="Hume D.A."/>
            <person name="Kai C."/>
            <person name="Sasaki D."/>
            <person name="Tomaru Y."/>
            <person name="Fukuda S."/>
            <person name="Kanamori-Katayama M."/>
            <person name="Suzuki M."/>
            <person name="Aoki J."/>
            <person name="Arakawa T."/>
            <person name="Iida J."/>
            <person name="Imamura K."/>
            <person name="Itoh M."/>
            <person name="Kato T."/>
            <person name="Kawaji H."/>
            <person name="Kawagashira N."/>
            <person name="Kawashima T."/>
            <person name="Kojima M."/>
            <person name="Kondo S."/>
            <person name="Konno H."/>
            <person name="Nakano K."/>
            <person name="Ninomiya N."/>
            <person name="Nishio T."/>
            <person name="Okada M."/>
            <person name="Plessy C."/>
            <person name="Shibata K."/>
            <person name="Shiraki T."/>
            <person name="Suzuki S."/>
            <person name="Tagami M."/>
            <person name="Waki K."/>
            <person name="Watahiki A."/>
            <person name="Okamura-Oho Y."/>
            <person name="Suzuki H."/>
            <person name="Kawai J."/>
            <person name="Hayashizaki Y."/>
        </authorList>
    </citation>
    <scope>NUCLEOTIDE SEQUENCE [LARGE SCALE MRNA] (ISOFORM 1)</scope>
    <source>
        <strain>NOD</strain>
        <tissue>Spleen</tissue>
    </source>
</reference>
<reference key="3">
    <citation type="journal article" date="2004" name="Genome Res.">
        <title>The status, quality, and expansion of the NIH full-length cDNA project: the Mammalian Gene Collection (MGC).</title>
        <authorList>
            <consortium name="The MGC Project Team"/>
        </authorList>
    </citation>
    <scope>NUCLEOTIDE SEQUENCE [LARGE SCALE MRNA] (ISOFORM 2)</scope>
    <source>
        <tissue>Eye</tissue>
    </source>
</reference>
<reference key="4">
    <citation type="journal article" date="2010" name="Cell">
        <title>A tissue-specific atlas of mouse protein phosphorylation and expression.</title>
        <authorList>
            <person name="Huttlin E.L."/>
            <person name="Jedrychowski M.P."/>
            <person name="Elias J.E."/>
            <person name="Goswami T."/>
            <person name="Rad R."/>
            <person name="Beausoleil S.A."/>
            <person name="Villen J."/>
            <person name="Haas W."/>
            <person name="Sowa M.E."/>
            <person name="Gygi S.P."/>
        </authorList>
    </citation>
    <scope>PHOSPHORYLATION [LARGE SCALE ANALYSIS] AT THR-260; SER-263 AND SER-264</scope>
    <scope>IDENTIFICATION BY MASS SPECTROMETRY [LARGE SCALE ANALYSIS]</scope>
    <source>
        <tissue>Brain</tissue>
        <tissue>Brown adipose tissue</tissue>
        <tissue>Kidney</tissue>
        <tissue>Lung</tissue>
        <tissue>Pancreas</tissue>
        <tissue>Spleen</tissue>
        <tissue>Testis</tissue>
    </source>
</reference>
<keyword id="KW-0025">Alternative splicing</keyword>
<keyword id="KW-0285">Flavoprotein</keyword>
<keyword id="KW-0288">FMN</keyword>
<keyword id="KW-1017">Isopeptide bond</keyword>
<keyword id="KW-0479">Metal-binding</keyword>
<keyword id="KW-0507">mRNA processing</keyword>
<keyword id="KW-0520">NAD</keyword>
<keyword id="KW-0521">NADP</keyword>
<keyword id="KW-0560">Oxidoreductase</keyword>
<keyword id="KW-0597">Phosphoprotein</keyword>
<keyword id="KW-1185">Reference proteome</keyword>
<keyword id="KW-0677">Repeat</keyword>
<keyword id="KW-0819">tRNA processing</keyword>
<keyword id="KW-0832">Ubl conjugation</keyword>
<keyword id="KW-0862">Zinc</keyword>
<keyword id="KW-0863">Zinc-finger</keyword>